<proteinExistence type="inferred from homology"/>
<feature type="chain" id="PRO_0000113360" description="Malate dehydrogenase">
    <location>
        <begin position="1"/>
        <end position="326"/>
    </location>
</feature>
<feature type="active site" description="Proton acceptor" evidence="1">
    <location>
        <position position="187"/>
    </location>
</feature>
<feature type="binding site" evidence="1">
    <location>
        <begin position="11"/>
        <end position="17"/>
    </location>
    <ligand>
        <name>NAD(+)</name>
        <dbReference type="ChEBI" id="CHEBI:57540"/>
    </ligand>
</feature>
<feature type="binding site" evidence="1">
    <location>
        <position position="92"/>
    </location>
    <ligand>
        <name>substrate</name>
    </ligand>
</feature>
<feature type="binding site" evidence="1">
    <location>
        <position position="98"/>
    </location>
    <ligand>
        <name>substrate</name>
    </ligand>
</feature>
<feature type="binding site" evidence="1">
    <location>
        <position position="105"/>
    </location>
    <ligand>
        <name>NAD(+)</name>
        <dbReference type="ChEBI" id="CHEBI:57540"/>
    </ligand>
</feature>
<feature type="binding site" evidence="1">
    <location>
        <position position="112"/>
    </location>
    <ligand>
        <name>NAD(+)</name>
        <dbReference type="ChEBI" id="CHEBI:57540"/>
    </ligand>
</feature>
<feature type="binding site" evidence="1">
    <location>
        <begin position="129"/>
        <end position="131"/>
    </location>
    <ligand>
        <name>NAD(+)</name>
        <dbReference type="ChEBI" id="CHEBI:57540"/>
    </ligand>
</feature>
<feature type="binding site" evidence="1">
    <location>
        <position position="131"/>
    </location>
    <ligand>
        <name>substrate</name>
    </ligand>
</feature>
<feature type="binding site" evidence="1">
    <location>
        <position position="162"/>
    </location>
    <ligand>
        <name>substrate</name>
    </ligand>
</feature>
<name>MDH_CHRVO</name>
<reference key="1">
    <citation type="journal article" date="2003" name="Proc. Natl. Acad. Sci. U.S.A.">
        <title>The complete genome sequence of Chromobacterium violaceum reveals remarkable and exploitable bacterial adaptability.</title>
        <authorList>
            <person name="Vasconcelos A.T.R."/>
            <person name="de Almeida D.F."/>
            <person name="Hungria M."/>
            <person name="Guimaraes C.T."/>
            <person name="Antonio R.V."/>
            <person name="Almeida F.C."/>
            <person name="de Almeida L.G.P."/>
            <person name="de Almeida R."/>
            <person name="Alves-Gomes J.A."/>
            <person name="Andrade E.M."/>
            <person name="Araripe J."/>
            <person name="de Araujo M.F.F."/>
            <person name="Astolfi-Filho S."/>
            <person name="Azevedo V."/>
            <person name="Baptista A.J."/>
            <person name="Bataus L.A.M."/>
            <person name="Batista J.S."/>
            <person name="Belo A."/>
            <person name="van den Berg C."/>
            <person name="Bogo M."/>
            <person name="Bonatto S."/>
            <person name="Bordignon J."/>
            <person name="Brigido M.M."/>
            <person name="Brito C.A."/>
            <person name="Brocchi M."/>
            <person name="Burity H.A."/>
            <person name="Camargo A.A."/>
            <person name="Cardoso D.D.P."/>
            <person name="Carneiro N.P."/>
            <person name="Carraro D.M."/>
            <person name="Carvalho C.M.B."/>
            <person name="Cascardo J.C.M."/>
            <person name="Cavada B.S."/>
            <person name="Chueire L.M.O."/>
            <person name="Creczynski-Pasa T.B."/>
            <person name="Cunha-Junior N.C."/>
            <person name="Fagundes N."/>
            <person name="Falcao C.L."/>
            <person name="Fantinatti F."/>
            <person name="Farias I.P."/>
            <person name="Felipe M.S.S."/>
            <person name="Ferrari L.P."/>
            <person name="Ferro J.A."/>
            <person name="Ferro M.I.T."/>
            <person name="Franco G.R."/>
            <person name="Freitas N.S.A."/>
            <person name="Furlan L.R."/>
            <person name="Gazzinelli R.T."/>
            <person name="Gomes E.A."/>
            <person name="Goncalves P.R."/>
            <person name="Grangeiro T.B."/>
            <person name="Grattapaglia D."/>
            <person name="Grisard E.C."/>
            <person name="Hanna E.S."/>
            <person name="Jardim S.N."/>
            <person name="Laurino J."/>
            <person name="Leoi L.C.T."/>
            <person name="Lima L.F.A."/>
            <person name="Loureiro M.F."/>
            <person name="Lyra M.C.C.P."/>
            <person name="Madeira H.M.F."/>
            <person name="Manfio G.P."/>
            <person name="Maranhao A.Q."/>
            <person name="Martins W.S."/>
            <person name="di Mauro S.M.Z."/>
            <person name="de Medeiros S.R.B."/>
            <person name="Meissner R.V."/>
            <person name="Moreira M.A.M."/>
            <person name="Nascimento F.F."/>
            <person name="Nicolas M.F."/>
            <person name="Oliveira J.G."/>
            <person name="Oliveira S.C."/>
            <person name="Paixao R.F.C."/>
            <person name="Parente J.A."/>
            <person name="Pedrosa F.O."/>
            <person name="Pena S.D.J."/>
            <person name="Pereira J.O."/>
            <person name="Pereira M."/>
            <person name="Pinto L.S.R.C."/>
            <person name="Pinto L.S."/>
            <person name="Porto J.I.R."/>
            <person name="Potrich D.P."/>
            <person name="Ramalho-Neto C.E."/>
            <person name="Reis A.M.M."/>
            <person name="Rigo L.U."/>
            <person name="Rondinelli E."/>
            <person name="Santos E.B.P."/>
            <person name="Santos F.R."/>
            <person name="Schneider M.P.C."/>
            <person name="Seuanez H.N."/>
            <person name="Silva A.M.R."/>
            <person name="da Silva A.L.C."/>
            <person name="Silva D.W."/>
            <person name="Silva R."/>
            <person name="Simoes I.C."/>
            <person name="Simon D."/>
            <person name="Soares C.M.A."/>
            <person name="Soares R.B.A."/>
            <person name="Souza E.M."/>
            <person name="Souza K.R.L."/>
            <person name="Souza R.C."/>
            <person name="Steffens M.B.R."/>
            <person name="Steindel M."/>
            <person name="Teixeira S.R."/>
            <person name="Urmenyi T."/>
            <person name="Vettore A."/>
            <person name="Wassem R."/>
            <person name="Zaha A."/>
            <person name="Simpson A.J.G."/>
        </authorList>
    </citation>
    <scope>NUCLEOTIDE SEQUENCE [LARGE SCALE GENOMIC DNA]</scope>
    <source>
        <strain>ATCC 12472 / DSM 30191 / JCM 1249 / CCUG 213 / NBRC 12614 / NCIMB 9131 / NCTC 9757 / MK</strain>
    </source>
</reference>
<keyword id="KW-0520">NAD</keyword>
<keyword id="KW-0560">Oxidoreductase</keyword>
<keyword id="KW-1185">Reference proteome</keyword>
<keyword id="KW-0816">Tricarboxylic acid cycle</keyword>
<organism>
    <name type="scientific">Chromobacterium violaceum (strain ATCC 12472 / DSM 30191 / JCM 1249 / CCUG 213 / NBRC 12614 / NCIMB 9131 / NCTC 9757 / MK)</name>
    <dbReference type="NCBI Taxonomy" id="243365"/>
    <lineage>
        <taxon>Bacteria</taxon>
        <taxon>Pseudomonadati</taxon>
        <taxon>Pseudomonadota</taxon>
        <taxon>Betaproteobacteria</taxon>
        <taxon>Neisseriales</taxon>
        <taxon>Chromobacteriaceae</taxon>
        <taxon>Chromobacterium</taxon>
    </lineage>
</organism>
<comment type="function">
    <text evidence="1">Catalyzes the reversible oxidation of malate to oxaloacetate.</text>
</comment>
<comment type="catalytic activity">
    <reaction evidence="1">
        <text>(S)-malate + NAD(+) = oxaloacetate + NADH + H(+)</text>
        <dbReference type="Rhea" id="RHEA:21432"/>
        <dbReference type="ChEBI" id="CHEBI:15378"/>
        <dbReference type="ChEBI" id="CHEBI:15589"/>
        <dbReference type="ChEBI" id="CHEBI:16452"/>
        <dbReference type="ChEBI" id="CHEBI:57540"/>
        <dbReference type="ChEBI" id="CHEBI:57945"/>
        <dbReference type="EC" id="1.1.1.37"/>
    </reaction>
</comment>
<comment type="similarity">
    <text evidence="1">Belongs to the LDH/MDH superfamily. MDH type 2 family.</text>
</comment>
<accession>Q7NZ60</accession>
<gene>
    <name evidence="1" type="primary">mdh</name>
    <name type="ordered locus">CV_1062</name>
</gene>
<protein>
    <recommendedName>
        <fullName evidence="1">Malate dehydrogenase</fullName>
        <ecNumber evidence="1">1.1.1.37</ecNumber>
    </recommendedName>
</protein>
<dbReference type="EC" id="1.1.1.37" evidence="1"/>
<dbReference type="EMBL" id="AE016825">
    <property type="protein sequence ID" value="AAQ58737.1"/>
    <property type="molecule type" value="Genomic_DNA"/>
</dbReference>
<dbReference type="RefSeq" id="WP_011134617.1">
    <property type="nucleotide sequence ID" value="NC_005085.1"/>
</dbReference>
<dbReference type="SMR" id="Q7NZ60"/>
<dbReference type="STRING" id="243365.CV_1062"/>
<dbReference type="GeneID" id="66366761"/>
<dbReference type="KEGG" id="cvi:CV_1062"/>
<dbReference type="eggNOG" id="COG0039">
    <property type="taxonomic scope" value="Bacteria"/>
</dbReference>
<dbReference type="HOGENOM" id="CLU_040727_2_0_4"/>
<dbReference type="OrthoDB" id="9802969at2"/>
<dbReference type="Proteomes" id="UP000001424">
    <property type="component" value="Chromosome"/>
</dbReference>
<dbReference type="GO" id="GO:0030060">
    <property type="term" value="F:L-malate dehydrogenase (NAD+) activity"/>
    <property type="evidence" value="ECO:0007669"/>
    <property type="project" value="UniProtKB-UniRule"/>
</dbReference>
<dbReference type="GO" id="GO:0006108">
    <property type="term" value="P:malate metabolic process"/>
    <property type="evidence" value="ECO:0007669"/>
    <property type="project" value="InterPro"/>
</dbReference>
<dbReference type="GO" id="GO:0006099">
    <property type="term" value="P:tricarboxylic acid cycle"/>
    <property type="evidence" value="ECO:0007669"/>
    <property type="project" value="UniProtKB-UniRule"/>
</dbReference>
<dbReference type="CDD" id="cd01338">
    <property type="entry name" value="MDH_chloroplast-like"/>
    <property type="match status" value="1"/>
</dbReference>
<dbReference type="FunFam" id="3.40.50.720:FF:000010">
    <property type="entry name" value="Malate dehydrogenase"/>
    <property type="match status" value="1"/>
</dbReference>
<dbReference type="FunFam" id="3.90.110.10:FF:000002">
    <property type="entry name" value="Malate dehydrogenase"/>
    <property type="match status" value="1"/>
</dbReference>
<dbReference type="Gene3D" id="3.90.110.10">
    <property type="entry name" value="Lactate dehydrogenase/glycoside hydrolase, family 4, C-terminal"/>
    <property type="match status" value="1"/>
</dbReference>
<dbReference type="Gene3D" id="3.40.50.720">
    <property type="entry name" value="NAD(P)-binding Rossmann-like Domain"/>
    <property type="match status" value="1"/>
</dbReference>
<dbReference type="HAMAP" id="MF_01517">
    <property type="entry name" value="Malate_dehydrog_2"/>
    <property type="match status" value="1"/>
</dbReference>
<dbReference type="InterPro" id="IPR001557">
    <property type="entry name" value="L-lactate/malate_DH"/>
</dbReference>
<dbReference type="InterPro" id="IPR022383">
    <property type="entry name" value="Lactate/malate_DH_C"/>
</dbReference>
<dbReference type="InterPro" id="IPR001236">
    <property type="entry name" value="Lactate/malate_DH_N"/>
</dbReference>
<dbReference type="InterPro" id="IPR015955">
    <property type="entry name" value="Lactate_DH/Glyco_Ohase_4_C"/>
</dbReference>
<dbReference type="InterPro" id="IPR010945">
    <property type="entry name" value="Malate_DH_type2"/>
</dbReference>
<dbReference type="InterPro" id="IPR036291">
    <property type="entry name" value="NAD(P)-bd_dom_sf"/>
</dbReference>
<dbReference type="NCBIfam" id="TIGR01759">
    <property type="entry name" value="MalateDH-SF1"/>
    <property type="match status" value="1"/>
</dbReference>
<dbReference type="NCBIfam" id="NF003916">
    <property type="entry name" value="PRK05442.1"/>
    <property type="match status" value="1"/>
</dbReference>
<dbReference type="PANTHER" id="PTHR23382">
    <property type="entry name" value="MALATE DEHYDROGENASE"/>
    <property type="match status" value="1"/>
</dbReference>
<dbReference type="Pfam" id="PF02866">
    <property type="entry name" value="Ldh_1_C"/>
    <property type="match status" value="1"/>
</dbReference>
<dbReference type="Pfam" id="PF00056">
    <property type="entry name" value="Ldh_1_N"/>
    <property type="match status" value="1"/>
</dbReference>
<dbReference type="PIRSF" id="PIRSF000102">
    <property type="entry name" value="Lac_mal_DH"/>
    <property type="match status" value="1"/>
</dbReference>
<dbReference type="SUPFAM" id="SSF56327">
    <property type="entry name" value="LDH C-terminal domain-like"/>
    <property type="match status" value="1"/>
</dbReference>
<dbReference type="SUPFAM" id="SSF51735">
    <property type="entry name" value="NAD(P)-binding Rossmann-fold domains"/>
    <property type="match status" value="1"/>
</dbReference>
<evidence type="ECO:0000255" key="1">
    <source>
        <dbReference type="HAMAP-Rule" id="MF_01517"/>
    </source>
</evidence>
<sequence length="326" mass="35037">MKAPVRVAVTGAAGQIGYSLLFRIASGEMLGKDQPVILHLLDLPQAQTALKGVMMELEDCAFPLLAGMVATDDPNVAFKDVKVALLVGARPRSKGMERKDLLEANGAIFTVQGKALNDHAARDVKVLVVGNPANTNAWIAMKSAPDLDPKNFTAMLRLDHNRALSQIAAKTGKPVASIEKLAVWGNHSPTMYADYRFATIDGQSVKAMINDDVWNRDVFLPTVGKRGAAIIEARGLSSAASAANAAIDHIRDWVLGTNGKWVTMGVPSDGSYGIPEGVMYGVPVVCENGEYKRVEGLEIDAFSRERMDLTLAELEEERAAIAHLFG</sequence>